<keyword id="KW-0027">Amidation</keyword>
<keyword id="KW-0903">Direct protein sequencing</keyword>
<keyword id="KW-0527">Neuropeptide</keyword>
<keyword id="KW-0964">Secreted</keyword>
<accession>P41486</accession>
<proteinExistence type="evidence at protein level"/>
<dbReference type="GO" id="GO:0005576">
    <property type="term" value="C:extracellular region"/>
    <property type="evidence" value="ECO:0007669"/>
    <property type="project" value="UniProtKB-SubCell"/>
</dbReference>
<dbReference type="GO" id="GO:0007218">
    <property type="term" value="P:neuropeptide signaling pathway"/>
    <property type="evidence" value="ECO:0007669"/>
    <property type="project" value="UniProtKB-KW"/>
</dbReference>
<organism>
    <name type="scientific">Homarus americanus</name>
    <name type="common">American lobster</name>
    <dbReference type="NCBI Taxonomy" id="6706"/>
    <lineage>
        <taxon>Eukaryota</taxon>
        <taxon>Metazoa</taxon>
        <taxon>Ecdysozoa</taxon>
        <taxon>Arthropoda</taxon>
        <taxon>Crustacea</taxon>
        <taxon>Multicrustacea</taxon>
        <taxon>Malacostraca</taxon>
        <taxon>Eumalacostraca</taxon>
        <taxon>Eucarida</taxon>
        <taxon>Decapoda</taxon>
        <taxon>Pleocyemata</taxon>
        <taxon>Astacidea</taxon>
        <taxon>Nephropoidea</taxon>
        <taxon>Nephropidae</taxon>
        <taxon>Homarus</taxon>
    </lineage>
</organism>
<protein>
    <recommendedName>
        <fullName>FMRFamide-like neuropeptide 3</fullName>
        <shortName>FLI 3</shortName>
    </recommendedName>
    <alternativeName>
        <fullName>F2</fullName>
    </alternativeName>
</protein>
<comment type="subcellular location">
    <subcellularLocation>
        <location>Secreted</location>
    </subcellularLocation>
</comment>
<comment type="miscellaneous">
    <text>Pericardial organs release this peptide with 100 mm potassium in the presence of calcium.</text>
</comment>
<comment type="similarity">
    <text evidence="2">Belongs to the FARP (FMRFamide related peptide) family.</text>
</comment>
<sequence length="8" mass="1054">SDRNFLRF</sequence>
<name>FAR3_HOMAM</name>
<reference key="1">
    <citation type="journal article" date="1987" name="J. Comp. Neurol.">
        <title>Purification and characterization of FMRFamidelike immunoreactive substances from the lobster nervous system: isolation and sequence analysis of two closely related peptides.</title>
        <authorList>
            <person name="Trimmer B.A."/>
            <person name="Kobierski L.A."/>
            <person name="Kravitz E.A."/>
        </authorList>
    </citation>
    <scope>PROTEIN SEQUENCE</scope>
    <scope>AMIDATION AT PHE-8</scope>
    <source>
        <tissue>Pericardial organs</tissue>
    </source>
</reference>
<feature type="peptide" id="PRO_0000043694" description="FMRFamide-like neuropeptide 3">
    <location>
        <begin position="1"/>
        <end position="8"/>
    </location>
</feature>
<feature type="modified residue" description="Phenylalanine amide" evidence="1">
    <location>
        <position position="8"/>
    </location>
</feature>
<evidence type="ECO:0000269" key="1">
    <source>
    </source>
</evidence>
<evidence type="ECO:0000305" key="2"/>